<sequence length="440" mass="48672">VGFKAGVKDYRLTYYTPEYKTKDTDILAAFRMTPQPGVPAEEAGAAVAAESSTGTWTTVWTDGLTSLDRYKGRCYDIEPVAGEENQYIAYVAYPLDLFEEGSVTNLFTSIVGNVFGFKALRALRLEDLRIPPAYSKTFIGPPHGIQVERDKLNKYGRPLLGCTIKPKLGLSAKNYGRAVYECLRGGLDFTKDDENVNSQPFMRWRDRFLFVAEALFKSQAETGEIKGHYLNATAGTCEEMLKRAVFARELGAPIVMHDYLTGGFTANTSLAFYCRDNGLLLHIHRAMHAVIDRQRNHGIHFRVLAKALRMSGGDHIHAGTVVGKLEGEREVTLGFVDLLRDDYIEKDRSRGIYFTQDWVSMPGVLPVASGGIHVWHMPALTEIFGDDSVLQFGGGTLGHPWGNAPGAVANRVALEACVQARNEGRDLAREGNTIIREASK</sequence>
<protein>
    <recommendedName>
        <fullName evidence="1">Ribulose bisphosphate carboxylase large chain</fullName>
        <shortName evidence="1">RuBisCO large subunit</shortName>
        <ecNumber evidence="1">4.1.1.39</ecNumber>
    </recommendedName>
</protein>
<proteinExistence type="inferred from homology"/>
<gene>
    <name evidence="1" type="primary">rbcL</name>
</gene>
<evidence type="ECO:0000255" key="1">
    <source>
        <dbReference type="HAMAP-Rule" id="MF_01338"/>
    </source>
</evidence>
<name>RBL_MATST</name>
<comment type="function">
    <text evidence="1">RuBisCO catalyzes two reactions: the carboxylation of D-ribulose 1,5-bisphosphate, the primary event in carbon dioxide fixation, as well as the oxidative fragmentation of the pentose substrate in the photorespiration process. Both reactions occur simultaneously and in competition at the same active site.</text>
</comment>
<comment type="catalytic activity">
    <reaction evidence="1">
        <text>2 (2R)-3-phosphoglycerate + 2 H(+) = D-ribulose 1,5-bisphosphate + CO2 + H2O</text>
        <dbReference type="Rhea" id="RHEA:23124"/>
        <dbReference type="ChEBI" id="CHEBI:15377"/>
        <dbReference type="ChEBI" id="CHEBI:15378"/>
        <dbReference type="ChEBI" id="CHEBI:16526"/>
        <dbReference type="ChEBI" id="CHEBI:57870"/>
        <dbReference type="ChEBI" id="CHEBI:58272"/>
        <dbReference type="EC" id="4.1.1.39"/>
    </reaction>
</comment>
<comment type="catalytic activity">
    <reaction evidence="1">
        <text>D-ribulose 1,5-bisphosphate + O2 = 2-phosphoglycolate + (2R)-3-phosphoglycerate + 2 H(+)</text>
        <dbReference type="Rhea" id="RHEA:36631"/>
        <dbReference type="ChEBI" id="CHEBI:15378"/>
        <dbReference type="ChEBI" id="CHEBI:15379"/>
        <dbReference type="ChEBI" id="CHEBI:57870"/>
        <dbReference type="ChEBI" id="CHEBI:58033"/>
        <dbReference type="ChEBI" id="CHEBI:58272"/>
    </reaction>
</comment>
<comment type="cofactor">
    <cofactor evidence="1">
        <name>Mg(2+)</name>
        <dbReference type="ChEBI" id="CHEBI:18420"/>
    </cofactor>
    <text evidence="1">Binds 1 Mg(2+) ion per subunit.</text>
</comment>
<comment type="subunit">
    <text evidence="1">Heterohexadecamer of 8 large chains and 8 small chains; disulfide-linked. The disulfide link is formed within the large subunit homodimers.</text>
</comment>
<comment type="subcellular location">
    <subcellularLocation>
        <location>Plastid</location>
        <location>Chloroplast</location>
    </subcellularLocation>
</comment>
<comment type="PTM">
    <text evidence="1">The disulfide bond which can form in the large chain dimeric partners within the hexadecamer appears to be associated with oxidative stress and protein turnover.</text>
</comment>
<comment type="miscellaneous">
    <text evidence="1">The basic functional RuBisCO is composed of a large chain homodimer in a 'head-to-tail' conformation. In form I RuBisCO this homodimer is arranged in a barrel-like tetramer with the small subunits forming a tetrameric 'cap' on each end of the 'barrel'.</text>
</comment>
<comment type="similarity">
    <text evidence="1">Belongs to the RuBisCO large chain family. Type I subfamily.</text>
</comment>
<accession>P48707</accession>
<dbReference type="EC" id="4.1.1.39" evidence="1"/>
<dbReference type="EMBL" id="U05930">
    <property type="protein sequence ID" value="AAC48955.1"/>
    <property type="molecule type" value="Genomic_DNA"/>
</dbReference>
<dbReference type="SMR" id="P48707"/>
<dbReference type="GO" id="GO:0009507">
    <property type="term" value="C:chloroplast"/>
    <property type="evidence" value="ECO:0007669"/>
    <property type="project" value="UniProtKB-SubCell"/>
</dbReference>
<dbReference type="GO" id="GO:0000287">
    <property type="term" value="F:magnesium ion binding"/>
    <property type="evidence" value="ECO:0007669"/>
    <property type="project" value="InterPro"/>
</dbReference>
<dbReference type="GO" id="GO:0004497">
    <property type="term" value="F:monooxygenase activity"/>
    <property type="evidence" value="ECO:0007669"/>
    <property type="project" value="UniProtKB-KW"/>
</dbReference>
<dbReference type="GO" id="GO:0016984">
    <property type="term" value="F:ribulose-bisphosphate carboxylase activity"/>
    <property type="evidence" value="ECO:0007669"/>
    <property type="project" value="UniProtKB-EC"/>
</dbReference>
<dbReference type="GO" id="GO:0009853">
    <property type="term" value="P:photorespiration"/>
    <property type="evidence" value="ECO:0007669"/>
    <property type="project" value="UniProtKB-KW"/>
</dbReference>
<dbReference type="GO" id="GO:0019253">
    <property type="term" value="P:reductive pentose-phosphate cycle"/>
    <property type="evidence" value="ECO:0007669"/>
    <property type="project" value="UniProtKB-KW"/>
</dbReference>
<dbReference type="CDD" id="cd08212">
    <property type="entry name" value="RuBisCO_large_I"/>
    <property type="match status" value="1"/>
</dbReference>
<dbReference type="FunFam" id="3.20.20.110:FF:000003">
    <property type="entry name" value="Ribulose bisphosphate carboxylase large chain"/>
    <property type="match status" value="1"/>
</dbReference>
<dbReference type="FunFam" id="3.30.70.150:FF:000001">
    <property type="entry name" value="Ribulose bisphosphate carboxylase large chain"/>
    <property type="match status" value="1"/>
</dbReference>
<dbReference type="Gene3D" id="3.20.20.110">
    <property type="entry name" value="Ribulose bisphosphate carboxylase, large subunit, C-terminal domain"/>
    <property type="match status" value="1"/>
</dbReference>
<dbReference type="Gene3D" id="3.30.70.150">
    <property type="entry name" value="RuBisCO large subunit, N-terminal domain"/>
    <property type="match status" value="1"/>
</dbReference>
<dbReference type="HAMAP" id="MF_01338">
    <property type="entry name" value="RuBisCO_L_type1"/>
    <property type="match status" value="1"/>
</dbReference>
<dbReference type="InterPro" id="IPR033966">
    <property type="entry name" value="RuBisCO"/>
</dbReference>
<dbReference type="InterPro" id="IPR020878">
    <property type="entry name" value="RuBisCo_large_chain_AS"/>
</dbReference>
<dbReference type="InterPro" id="IPR000685">
    <property type="entry name" value="RuBisCO_lsu_C"/>
</dbReference>
<dbReference type="InterPro" id="IPR036376">
    <property type="entry name" value="RuBisCO_lsu_C_sf"/>
</dbReference>
<dbReference type="InterPro" id="IPR017443">
    <property type="entry name" value="RuBisCO_lsu_fd_N"/>
</dbReference>
<dbReference type="InterPro" id="IPR036422">
    <property type="entry name" value="RuBisCO_lsu_N_sf"/>
</dbReference>
<dbReference type="InterPro" id="IPR020888">
    <property type="entry name" value="RuBisCO_lsuI"/>
</dbReference>
<dbReference type="NCBIfam" id="NF003252">
    <property type="entry name" value="PRK04208.1"/>
    <property type="match status" value="1"/>
</dbReference>
<dbReference type="PANTHER" id="PTHR42704">
    <property type="entry name" value="RIBULOSE BISPHOSPHATE CARBOXYLASE"/>
    <property type="match status" value="1"/>
</dbReference>
<dbReference type="PANTHER" id="PTHR42704:SF17">
    <property type="entry name" value="RIBULOSE BISPHOSPHATE CARBOXYLASE LARGE CHAIN"/>
    <property type="match status" value="1"/>
</dbReference>
<dbReference type="Pfam" id="PF00016">
    <property type="entry name" value="RuBisCO_large"/>
    <property type="match status" value="1"/>
</dbReference>
<dbReference type="Pfam" id="PF02788">
    <property type="entry name" value="RuBisCO_large_N"/>
    <property type="match status" value="1"/>
</dbReference>
<dbReference type="SFLD" id="SFLDG01052">
    <property type="entry name" value="RuBisCO"/>
    <property type="match status" value="1"/>
</dbReference>
<dbReference type="SFLD" id="SFLDS00014">
    <property type="entry name" value="RuBisCO"/>
    <property type="match status" value="1"/>
</dbReference>
<dbReference type="SFLD" id="SFLDG00301">
    <property type="entry name" value="RuBisCO-like_proteins"/>
    <property type="match status" value="1"/>
</dbReference>
<dbReference type="SUPFAM" id="SSF51649">
    <property type="entry name" value="RuBisCo, C-terminal domain"/>
    <property type="match status" value="1"/>
</dbReference>
<dbReference type="SUPFAM" id="SSF54966">
    <property type="entry name" value="RuBisCO, large subunit, small (N-terminal) domain"/>
    <property type="match status" value="1"/>
</dbReference>
<dbReference type="PROSITE" id="PS00157">
    <property type="entry name" value="RUBISCO_LARGE"/>
    <property type="match status" value="1"/>
</dbReference>
<organism>
    <name type="scientific">Matteuccia struthiopteris</name>
    <name type="common">European ostrich fern</name>
    <name type="synonym">Osmunda struthiopteris</name>
    <dbReference type="NCBI Taxonomy" id="3277"/>
    <lineage>
        <taxon>Eukaryota</taxon>
        <taxon>Viridiplantae</taxon>
        <taxon>Streptophyta</taxon>
        <taxon>Embryophyta</taxon>
        <taxon>Tracheophyta</taxon>
        <taxon>Polypodiopsida</taxon>
        <taxon>Polypodiidae</taxon>
        <taxon>Polypodiales</taxon>
        <taxon>Aspleniineae</taxon>
        <taxon>Onocleaceae</taxon>
        <taxon>Matteuccia</taxon>
    </lineage>
</organism>
<geneLocation type="chloroplast"/>
<keyword id="KW-0113">Calvin cycle</keyword>
<keyword id="KW-0120">Carbon dioxide fixation</keyword>
<keyword id="KW-0150">Chloroplast</keyword>
<keyword id="KW-1015">Disulfide bond</keyword>
<keyword id="KW-0456">Lyase</keyword>
<keyword id="KW-0460">Magnesium</keyword>
<keyword id="KW-0479">Metal-binding</keyword>
<keyword id="KW-0488">Methylation</keyword>
<keyword id="KW-0503">Monooxygenase</keyword>
<keyword id="KW-0560">Oxidoreductase</keyword>
<keyword id="KW-0601">Photorespiration</keyword>
<keyword id="KW-0602">Photosynthesis</keyword>
<keyword id="KW-0934">Plastid</keyword>
<reference key="1">
    <citation type="journal article" date="1994" name="Mol. Phylogenet. Evol.">
        <title>Phylogenetic relationships of dennstaedtioid ferns: evidence from rbcL sequences.</title>
        <authorList>
            <person name="Wolf P.G."/>
            <person name="Soltis P.S."/>
            <person name="Soltis D.E."/>
        </authorList>
    </citation>
    <scope>NUCLEOTIDE SEQUENCE [GENOMIC DNA]</scope>
    <source>
        <tissue>Leaf</tissue>
    </source>
</reference>
<feature type="chain" id="PRO_0000062531" description="Ribulose bisphosphate carboxylase large chain">
    <location>
        <begin position="1" status="less than"/>
        <end position="440" status="greater than"/>
    </location>
</feature>
<feature type="active site" description="Proton acceptor" evidence="1">
    <location>
        <position position="165"/>
    </location>
</feature>
<feature type="active site" description="Proton acceptor" evidence="1">
    <location>
        <position position="284"/>
    </location>
</feature>
<feature type="binding site" description="in homodimeric partner" evidence="1">
    <location>
        <position position="113"/>
    </location>
    <ligand>
        <name>substrate</name>
    </ligand>
</feature>
<feature type="binding site" evidence="1">
    <location>
        <position position="163"/>
    </location>
    <ligand>
        <name>substrate</name>
    </ligand>
</feature>
<feature type="binding site" evidence="1">
    <location>
        <position position="167"/>
    </location>
    <ligand>
        <name>substrate</name>
    </ligand>
</feature>
<feature type="binding site" description="via carbamate group" evidence="1">
    <location>
        <position position="191"/>
    </location>
    <ligand>
        <name>Mg(2+)</name>
        <dbReference type="ChEBI" id="CHEBI:18420"/>
    </ligand>
</feature>
<feature type="binding site" evidence="1">
    <location>
        <position position="193"/>
    </location>
    <ligand>
        <name>Mg(2+)</name>
        <dbReference type="ChEBI" id="CHEBI:18420"/>
    </ligand>
</feature>
<feature type="binding site" evidence="1">
    <location>
        <position position="194"/>
    </location>
    <ligand>
        <name>Mg(2+)</name>
        <dbReference type="ChEBI" id="CHEBI:18420"/>
    </ligand>
</feature>
<feature type="binding site" evidence="1">
    <location>
        <position position="285"/>
    </location>
    <ligand>
        <name>substrate</name>
    </ligand>
</feature>
<feature type="binding site" evidence="1">
    <location>
        <position position="317"/>
    </location>
    <ligand>
        <name>substrate</name>
    </ligand>
</feature>
<feature type="binding site" evidence="1">
    <location>
        <position position="369"/>
    </location>
    <ligand>
        <name>substrate</name>
    </ligand>
</feature>
<feature type="site" description="Transition state stabilizer" evidence="1">
    <location>
        <position position="324"/>
    </location>
</feature>
<feature type="modified residue" description="N6,N6,N6-trimethyllysine" evidence="1">
    <location>
        <position position="4"/>
    </location>
</feature>
<feature type="modified residue" description="N6-carboxylysine" evidence="1">
    <location>
        <position position="191"/>
    </location>
</feature>
<feature type="disulfide bond" description="Interchain; in linked form" evidence="1">
    <location>
        <position position="237"/>
    </location>
</feature>
<feature type="non-terminal residue">
    <location>
        <position position="1"/>
    </location>
</feature>
<feature type="non-terminal residue">
    <location>
        <position position="440"/>
    </location>
</feature>